<feature type="chain" id="PRO_0000366890" description="Eukaryotic translation initiation factor 3 subunit E">
    <location>
        <begin position="1"/>
        <end position="451"/>
    </location>
</feature>
<feature type="domain" description="PCI" evidence="2">
    <location>
        <begin position="245"/>
        <end position="425"/>
    </location>
</feature>
<sequence length="451" mass="51770">MADNTPTTANDFLNGAAQVAKSPEEIAKENDLLPKLITHLDRHLIFPLLQFVADQDEEPSPEITKAKFELLKKTNMTDYVASLYCEIEGVEEPPKEYATKRQEILQRLEIFGQESEKITDLLGREDVVTGLRSDKVANLEFLKKEHDVTIDMVNVLYDFGNFQYSCGNYGAAAELLYQFRVLSTDDDKVTAATWGKLACEILTGNWESAMEEVQKVKELIETKLFNKPVAQLNHRTWLIHWALFPFFNHEPARDVICDLFFSPAFINTIQTACPWILRYLTAAVITNRNRTRNTGQYQKQLKDIIRIVKQENYEYSDPVTDFIKALYLDFDFEEAQKKLSEAEEVLRSDFFLVAASENFVEAARHLISESYCKIHQRIDIKDLSARLGLNQDEGEKWIVNLIRDTRVDAKIDYKEGTVVMNHPPSSVYQQVIERTKGGFFRTQVLSAAVAK</sequence>
<reference key="1">
    <citation type="journal article" date="2011" name="PLoS Genet.">
        <title>Genomic analysis of the necrotrophic fungal pathogens Sclerotinia sclerotiorum and Botrytis cinerea.</title>
        <authorList>
            <person name="Amselem J."/>
            <person name="Cuomo C.A."/>
            <person name="van Kan J.A.L."/>
            <person name="Viaud M."/>
            <person name="Benito E.P."/>
            <person name="Couloux A."/>
            <person name="Coutinho P.M."/>
            <person name="de Vries R.P."/>
            <person name="Dyer P.S."/>
            <person name="Fillinger S."/>
            <person name="Fournier E."/>
            <person name="Gout L."/>
            <person name="Hahn M."/>
            <person name="Kohn L."/>
            <person name="Lapalu N."/>
            <person name="Plummer K.M."/>
            <person name="Pradier J.-M."/>
            <person name="Quevillon E."/>
            <person name="Sharon A."/>
            <person name="Simon A."/>
            <person name="ten Have A."/>
            <person name="Tudzynski B."/>
            <person name="Tudzynski P."/>
            <person name="Wincker P."/>
            <person name="Andrew M."/>
            <person name="Anthouard V."/>
            <person name="Beever R.E."/>
            <person name="Beffa R."/>
            <person name="Benoit I."/>
            <person name="Bouzid O."/>
            <person name="Brault B."/>
            <person name="Chen Z."/>
            <person name="Choquer M."/>
            <person name="Collemare J."/>
            <person name="Cotton P."/>
            <person name="Danchin E.G."/>
            <person name="Da Silva C."/>
            <person name="Gautier A."/>
            <person name="Giraud C."/>
            <person name="Giraud T."/>
            <person name="Gonzalez C."/>
            <person name="Grossetete S."/>
            <person name="Gueldener U."/>
            <person name="Henrissat B."/>
            <person name="Howlett B.J."/>
            <person name="Kodira C."/>
            <person name="Kretschmer M."/>
            <person name="Lappartient A."/>
            <person name="Leroch M."/>
            <person name="Levis C."/>
            <person name="Mauceli E."/>
            <person name="Neuveglise C."/>
            <person name="Oeser B."/>
            <person name="Pearson M."/>
            <person name="Poulain J."/>
            <person name="Poussereau N."/>
            <person name="Quesneville H."/>
            <person name="Rascle C."/>
            <person name="Schumacher J."/>
            <person name="Segurens B."/>
            <person name="Sexton A."/>
            <person name="Silva E."/>
            <person name="Sirven C."/>
            <person name="Soanes D.M."/>
            <person name="Talbot N.J."/>
            <person name="Templeton M."/>
            <person name="Yandava C."/>
            <person name="Yarden O."/>
            <person name="Zeng Q."/>
            <person name="Rollins J.A."/>
            <person name="Lebrun M.-H."/>
            <person name="Dickman M."/>
        </authorList>
    </citation>
    <scope>NUCLEOTIDE SEQUENCE [LARGE SCALE GENOMIC DNA]</scope>
    <source>
        <strain>ATCC 18683 / 1980 / Ss-1</strain>
    </source>
</reference>
<dbReference type="EMBL" id="CH476640">
    <property type="protein sequence ID" value="EDN97331.1"/>
    <property type="molecule type" value="Genomic_DNA"/>
</dbReference>
<dbReference type="RefSeq" id="XP_001586827.1">
    <property type="nucleotide sequence ID" value="XM_001586777.1"/>
</dbReference>
<dbReference type="SMR" id="A7F3L0"/>
<dbReference type="STRING" id="665079.A7F3L0"/>
<dbReference type="GeneID" id="5482784"/>
<dbReference type="KEGG" id="ssl:SS1G_11856"/>
<dbReference type="VEuPathDB" id="FungiDB:sscle_12g090990"/>
<dbReference type="InParanoid" id="A7F3L0"/>
<dbReference type="OMA" id="NCPWILR"/>
<dbReference type="OrthoDB" id="417252at2759"/>
<dbReference type="Proteomes" id="UP000001312">
    <property type="component" value="Unassembled WGS sequence"/>
</dbReference>
<dbReference type="GO" id="GO:0016282">
    <property type="term" value="C:eukaryotic 43S preinitiation complex"/>
    <property type="evidence" value="ECO:0007669"/>
    <property type="project" value="UniProtKB-UniRule"/>
</dbReference>
<dbReference type="GO" id="GO:0033290">
    <property type="term" value="C:eukaryotic 48S preinitiation complex"/>
    <property type="evidence" value="ECO:0007669"/>
    <property type="project" value="UniProtKB-UniRule"/>
</dbReference>
<dbReference type="GO" id="GO:0005852">
    <property type="term" value="C:eukaryotic translation initiation factor 3 complex"/>
    <property type="evidence" value="ECO:0000318"/>
    <property type="project" value="GO_Central"/>
</dbReference>
<dbReference type="GO" id="GO:0071540">
    <property type="term" value="C:eukaryotic translation initiation factor 3 complex, eIF3e"/>
    <property type="evidence" value="ECO:0007669"/>
    <property type="project" value="UniProtKB-UniRule"/>
</dbReference>
<dbReference type="GO" id="GO:0005634">
    <property type="term" value="C:nucleus"/>
    <property type="evidence" value="ECO:0000318"/>
    <property type="project" value="GO_Central"/>
</dbReference>
<dbReference type="GO" id="GO:0003743">
    <property type="term" value="F:translation initiation factor activity"/>
    <property type="evidence" value="ECO:0007669"/>
    <property type="project" value="UniProtKB-UniRule"/>
</dbReference>
<dbReference type="GO" id="GO:0001732">
    <property type="term" value="P:formation of cytoplasmic translation initiation complex"/>
    <property type="evidence" value="ECO:0007669"/>
    <property type="project" value="UniProtKB-UniRule"/>
</dbReference>
<dbReference type="GO" id="GO:0006413">
    <property type="term" value="P:translational initiation"/>
    <property type="evidence" value="ECO:0000318"/>
    <property type="project" value="GO_Central"/>
</dbReference>
<dbReference type="CDD" id="cd21378">
    <property type="entry name" value="eIF3E"/>
    <property type="match status" value="1"/>
</dbReference>
<dbReference type="Gene3D" id="1.25.40.570">
    <property type="match status" value="1"/>
</dbReference>
<dbReference type="HAMAP" id="MF_03004">
    <property type="entry name" value="eIF3e"/>
    <property type="match status" value="1"/>
</dbReference>
<dbReference type="InterPro" id="IPR016650">
    <property type="entry name" value="eIF3e"/>
</dbReference>
<dbReference type="InterPro" id="IPR019010">
    <property type="entry name" value="eIF3e_N"/>
</dbReference>
<dbReference type="InterPro" id="IPR000717">
    <property type="entry name" value="PCI_dom"/>
</dbReference>
<dbReference type="InterPro" id="IPR036390">
    <property type="entry name" value="WH_DNA-bd_sf"/>
</dbReference>
<dbReference type="PANTHER" id="PTHR10317">
    <property type="entry name" value="EUKARYOTIC TRANSLATION INITIATION FACTOR 3 SUBUNIT E"/>
    <property type="match status" value="1"/>
</dbReference>
<dbReference type="Pfam" id="PF09440">
    <property type="entry name" value="eIF3_N"/>
    <property type="match status" value="1"/>
</dbReference>
<dbReference type="Pfam" id="PF21357">
    <property type="entry name" value="EIF3E_C"/>
    <property type="match status" value="1"/>
</dbReference>
<dbReference type="Pfam" id="PF01399">
    <property type="entry name" value="PCI"/>
    <property type="match status" value="1"/>
</dbReference>
<dbReference type="PIRSF" id="PIRSF016255">
    <property type="entry name" value="eIF3e_su6"/>
    <property type="match status" value="1"/>
</dbReference>
<dbReference type="SMART" id="SM01186">
    <property type="entry name" value="eIF3_N"/>
    <property type="match status" value="1"/>
</dbReference>
<dbReference type="SMART" id="SM00088">
    <property type="entry name" value="PINT"/>
    <property type="match status" value="1"/>
</dbReference>
<dbReference type="SUPFAM" id="SSF46785">
    <property type="entry name" value="Winged helix' DNA-binding domain"/>
    <property type="match status" value="1"/>
</dbReference>
<dbReference type="PROSITE" id="PS50250">
    <property type="entry name" value="PCI"/>
    <property type="match status" value="1"/>
</dbReference>
<gene>
    <name type="primary">int6</name>
    <name type="ORF">SS1G_11856</name>
</gene>
<protein>
    <recommendedName>
        <fullName evidence="1">Eukaryotic translation initiation factor 3 subunit E</fullName>
        <shortName evidence="1">eIF3e</shortName>
    </recommendedName>
</protein>
<evidence type="ECO:0000255" key="1">
    <source>
        <dbReference type="HAMAP-Rule" id="MF_03004"/>
    </source>
</evidence>
<evidence type="ECO:0000255" key="2">
    <source>
        <dbReference type="PROSITE-ProRule" id="PRU01185"/>
    </source>
</evidence>
<name>EIF3E_SCLS1</name>
<accession>A7F3L0</accession>
<keyword id="KW-0963">Cytoplasm</keyword>
<keyword id="KW-0396">Initiation factor</keyword>
<keyword id="KW-0648">Protein biosynthesis</keyword>
<keyword id="KW-1185">Reference proteome</keyword>
<organism>
    <name type="scientific">Sclerotinia sclerotiorum (strain ATCC 18683 / 1980 / Ss-1)</name>
    <name type="common">White mold</name>
    <name type="synonym">Whetzelinia sclerotiorum</name>
    <dbReference type="NCBI Taxonomy" id="665079"/>
    <lineage>
        <taxon>Eukaryota</taxon>
        <taxon>Fungi</taxon>
        <taxon>Dikarya</taxon>
        <taxon>Ascomycota</taxon>
        <taxon>Pezizomycotina</taxon>
        <taxon>Leotiomycetes</taxon>
        <taxon>Helotiales</taxon>
        <taxon>Sclerotiniaceae</taxon>
        <taxon>Sclerotinia</taxon>
    </lineage>
</organism>
<proteinExistence type="inferred from homology"/>
<comment type="function">
    <text evidence="1">Component of the eukaryotic translation initiation factor 3 (eIF-3) complex, which is involved in protein synthesis of a specialized repertoire of mRNAs and, together with other initiation factors, stimulates binding of mRNA and methionyl-tRNAi to the 40S ribosome. The eIF-3 complex specifically targets and initiates translation of a subset of mRNAs involved in cell proliferation.</text>
</comment>
<comment type="subunit">
    <text evidence="1">Component of the eukaryotic translation initiation factor 3 (eIF-3) complex.</text>
</comment>
<comment type="subcellular location">
    <subcellularLocation>
        <location evidence="1">Cytoplasm</location>
    </subcellularLocation>
</comment>
<comment type="similarity">
    <text evidence="1">Belongs to the eIF-3 subunit E family.</text>
</comment>